<sequence>MQIKSFLLPIVAALLTSVSAADSSNKCSFSKTSITEATAITQLNACSTLDGEITVSGSGIGSIDLSSVKVLKAKLSILNSPSIVSLNFNQLQNITGALVINNATQLNSIDLTQLTNVETLQLVSLPSFAILNLNQGVQKAGTIVLSDTALTNLNGLASFNTIDSININNNKNISKIEFNDLQTVTDSLILSFNNDDAEVKLDSLKWAGNLTIQDVSSIQASNLTSVNGSLLISYNTFDELEFPNLKSVGNSMQIFAHDELTKISFPKLSELDGELEMFNNTQLEEIDFGNLTTIKGAVTISGPFDNLTMENLKLVSGDFQVNSTSDKFDCSAFDKLHEKGKIEGHNYVCTHPANPSSSSKSGSSTQTGKSDSKSSDGSSSSNSSSSSKKGASNVLVVPGMVLTTALGVLLALI</sequence>
<accession>Q5AGC4</accession>
<accession>A0A1D8PNF1</accession>
<keyword id="KW-1003">Cell membrane</keyword>
<keyword id="KW-0134">Cell wall</keyword>
<keyword id="KW-0961">Cell wall biogenesis/degradation</keyword>
<keyword id="KW-0325">Glycoprotein</keyword>
<keyword id="KW-0336">GPI-anchor</keyword>
<keyword id="KW-0449">Lipoprotein</keyword>
<keyword id="KW-0472">Membrane</keyword>
<keyword id="KW-1185">Reference proteome</keyword>
<keyword id="KW-0964">Secreted</keyword>
<keyword id="KW-0732">Signal</keyword>
<protein>
    <recommendedName>
        <fullName>Cell surface GPI-anchored protein ECM33</fullName>
    </recommendedName>
</protein>
<reference key="1">
    <citation type="journal article" date="2004" name="Proc. Natl. Acad. Sci. U.S.A.">
        <title>The diploid genome sequence of Candida albicans.</title>
        <authorList>
            <person name="Jones T."/>
            <person name="Federspiel N.A."/>
            <person name="Chibana H."/>
            <person name="Dungan J."/>
            <person name="Kalman S."/>
            <person name="Magee B.B."/>
            <person name="Newport G."/>
            <person name="Thorstenson Y.R."/>
            <person name="Agabian N."/>
            <person name="Magee P.T."/>
            <person name="Davis R.W."/>
            <person name="Scherer S."/>
        </authorList>
    </citation>
    <scope>NUCLEOTIDE SEQUENCE [LARGE SCALE GENOMIC DNA]</scope>
    <source>
        <strain>SC5314 / ATCC MYA-2876</strain>
    </source>
</reference>
<reference key="2">
    <citation type="journal article" date="2007" name="Genome Biol.">
        <title>Assembly of the Candida albicans genome into sixteen supercontigs aligned on the eight chromosomes.</title>
        <authorList>
            <person name="van het Hoog M."/>
            <person name="Rast T.J."/>
            <person name="Martchenko M."/>
            <person name="Grindle S."/>
            <person name="Dignard D."/>
            <person name="Hogues H."/>
            <person name="Cuomo C."/>
            <person name="Berriman M."/>
            <person name="Scherer S."/>
            <person name="Magee B.B."/>
            <person name="Whiteway M."/>
            <person name="Chibana H."/>
            <person name="Nantel A."/>
            <person name="Magee P.T."/>
        </authorList>
    </citation>
    <scope>GENOME REANNOTATION</scope>
    <source>
        <strain>SC5314 / ATCC MYA-2876</strain>
    </source>
</reference>
<reference key="3">
    <citation type="journal article" date="2013" name="Genome Biol.">
        <title>Assembly of a phased diploid Candida albicans genome facilitates allele-specific measurements and provides a simple model for repeat and indel structure.</title>
        <authorList>
            <person name="Muzzey D."/>
            <person name="Schwartz K."/>
            <person name="Weissman J.S."/>
            <person name="Sherlock G."/>
        </authorList>
    </citation>
    <scope>NUCLEOTIDE SEQUENCE [LARGE SCALE GENOMIC DNA]</scope>
    <scope>GENOME REANNOTATION</scope>
    <source>
        <strain>SC5314 / ATCC MYA-2876</strain>
    </source>
</reference>
<reference key="4">
    <citation type="journal article" date="2003" name="Eukaryot. Cell">
        <title>Diverged binding specificity of Rim101p, the Candida albicans ortholog of PacC.</title>
        <authorList>
            <person name="Ramon A.M."/>
            <person name="Fonzi W.A."/>
        </authorList>
    </citation>
    <scope>INDUCTION</scope>
</reference>
<reference key="5">
    <citation type="journal article" date="2003" name="Yeast">
        <title>Genome-wide identification of fungal GPI proteins.</title>
        <authorList>
            <person name="De Groot P.W."/>
            <person name="Hellingwerf K.J."/>
            <person name="Klis F.M."/>
        </authorList>
    </citation>
    <scope>PREDICTION OF GPI-ANCHOR</scope>
</reference>
<reference key="6">
    <citation type="journal article" date="2005" name="Antimicrob. Agents Chemother.">
        <title>Genome-wide expression profiling of the response to azole, polyene, echinocandin, and pyrimidine antifungal agents in Candida albicans.</title>
        <authorList>
            <person name="Liu T.T."/>
            <person name="Lee R.E."/>
            <person name="Barker K.S."/>
            <person name="Lee R.E."/>
            <person name="Wei L."/>
            <person name="Homayouni R."/>
            <person name="Rogers P.D."/>
        </authorList>
    </citation>
    <scope>INDUCTION</scope>
</reference>
<reference key="7">
    <citation type="journal article" date="2005" name="Curr. Biol.">
        <title>Regulation of cell-surface genes and biofilm formation by the C. albicans transcription factor Bcr1p.</title>
        <authorList>
            <person name="Nobile C.J."/>
            <person name="Mitchell A.P."/>
        </authorList>
    </citation>
    <scope>INDUCTION</scope>
</reference>
<reference key="8">
    <citation type="journal article" date="2005" name="Microbiology">
        <title>Functional analysis of the phospholipase C gene CaPLC1 and two unusual phospholipase C genes, CaPLC2 and CaPLC3, of Candida albicans.</title>
        <authorList>
            <person name="Kunze D."/>
            <person name="Melzer I."/>
            <person name="Bennett D."/>
            <person name="Sanglard D."/>
            <person name="MacCallum D."/>
            <person name="Norskau J."/>
            <person name="Coleman D.C."/>
            <person name="Odds F.C."/>
            <person name="Schafer W."/>
            <person name="Hube B."/>
        </authorList>
    </citation>
    <scope>INDUCTION</scope>
</reference>
<reference key="9">
    <citation type="journal article" date="2005" name="Mol. Biol. Cell">
        <title>Global roles of Ssn6 in Tup1- and Nrg1-dependent gene regulation in the fungal pathogen, Candida albicans.</title>
        <authorList>
            <person name="Garcia-Sanchez S."/>
            <person name="Mavor A.L."/>
            <person name="Russell C.L."/>
            <person name="Argimon S."/>
            <person name="Dennison P."/>
            <person name="Enjalbert B."/>
            <person name="Brown A.J."/>
        </authorList>
    </citation>
    <scope>INDUCTION</scope>
</reference>
<reference key="10">
    <citation type="journal article" date="2006" name="Mol. Biol. Cell">
        <title>Role of the Hog1 stress-activated protein kinase in the global transcriptional response to stress in the fungal pathogen Candida albicans.</title>
        <authorList>
            <person name="Enjalbert B."/>
            <person name="Smith D.A."/>
            <person name="Cornell M.J."/>
            <person name="Alam I."/>
            <person name="Nicholls S."/>
            <person name="Brown A.J.P."/>
            <person name="Quinn J."/>
        </authorList>
    </citation>
    <scope>INDUCTION</scope>
</reference>
<reference key="11">
    <citation type="journal article" date="2008" name="Eukaryot. Cell">
        <title>C-terminal signals regulate targeting of glycosylphosphatidylinositol-anchored proteins to the cell wall or plasma membrane in Candida albicans.</title>
        <authorList>
            <person name="Mao Y."/>
            <person name="Zhang Z."/>
            <person name="Gast C."/>
            <person name="Wong B."/>
        </authorList>
    </citation>
    <scope>GPI-ANCHOR AT GLY-390</scope>
    <scope>SUBCELLULAR LOCATION</scope>
</reference>
<reference key="12">
    <citation type="journal article" date="2008" name="Mol. Biol. Cell">
        <title>The Sur7 protein regulates plasma membrane organization and prevents intracellular cell wall growth in Candida albicans.</title>
        <authorList>
            <person name="Alvarez F.J."/>
            <person name="Douglas L.M."/>
            <person name="Rosebrock A."/>
            <person name="Konopka J.B."/>
        </authorList>
    </citation>
    <scope>INDUCTION</scope>
</reference>
<reference key="13">
    <citation type="journal article" date="2010" name="Eukaryot. Cell">
        <title>Regulation of the hypoxic response in Candida albicans.</title>
        <authorList>
            <person name="Synnott J.M."/>
            <person name="Guida A."/>
            <person name="Mulhern-Haughey S."/>
            <person name="Higgins D.G."/>
            <person name="Butler G."/>
        </authorList>
    </citation>
    <scope>INDUCTION</scope>
</reference>
<name>ECM33_CANAL</name>
<evidence type="ECO:0000250" key="1"/>
<evidence type="ECO:0000255" key="2"/>
<evidence type="ECO:0000256" key="3">
    <source>
        <dbReference type="SAM" id="MobiDB-lite"/>
    </source>
</evidence>
<evidence type="ECO:0000269" key="4">
    <source>
    </source>
</evidence>
<evidence type="ECO:0000269" key="5">
    <source>
    </source>
</evidence>
<evidence type="ECO:0000269" key="6">
    <source>
    </source>
</evidence>
<evidence type="ECO:0000269" key="7">
    <source>
    </source>
</evidence>
<evidence type="ECO:0000269" key="8">
    <source>
    </source>
</evidence>
<evidence type="ECO:0000269" key="9">
    <source>
    </source>
</evidence>
<evidence type="ECO:0000269" key="10">
    <source>
    </source>
</evidence>
<evidence type="ECO:0000269" key="11">
    <source>
    </source>
</evidence>
<evidence type="ECO:0000269" key="12">
    <source>
    </source>
</evidence>
<evidence type="ECO:0000305" key="13"/>
<comment type="function">
    <text evidence="1">Cell surface protein required for proper cell wall integrity and for the correct assembly of the mannoprotein outer layer of the cell wall.</text>
</comment>
<comment type="subcellular location">
    <subcellularLocation>
        <location evidence="10">Cell membrane</location>
        <topology evidence="10">Lipid-anchor</topology>
        <topology evidence="10">GPI-anchor</topology>
    </subcellularLocation>
    <subcellularLocation>
        <location evidence="10">Secreted</location>
        <location evidence="10">Cell wall</location>
    </subcellularLocation>
    <text>Mostly targeted to the plasma membrane.</text>
</comment>
<comment type="induction">
    <text evidence="4 5 6 7 8 9 11 12">Expression is induced by growth in hypoxic conditions and by caspofungin and ketoconazole. Expression is negatively regulated by BCR1, HOG1, PLC1, RIM101, SSN6, and SUR7.</text>
</comment>
<comment type="similarity">
    <text evidence="13">Belongs to the SPS2 family.</text>
</comment>
<dbReference type="EMBL" id="CP017627">
    <property type="protein sequence ID" value="AOW29671.1"/>
    <property type="molecule type" value="Genomic_DNA"/>
</dbReference>
<dbReference type="RefSeq" id="XP_720564.2">
    <property type="nucleotide sequence ID" value="XM_715471.2"/>
</dbReference>
<dbReference type="SMR" id="Q5AGC4"/>
<dbReference type="STRING" id="237561.Q5AGC4"/>
<dbReference type="GlyCosmos" id="Q5AGC4">
    <property type="glycosylation" value="11 sites, No reported glycans"/>
</dbReference>
<dbReference type="EnsemblFungi" id="C5_02460C_A-T">
    <property type="protein sequence ID" value="C5_02460C_A-T-p1"/>
    <property type="gene ID" value="C5_02460C_A"/>
</dbReference>
<dbReference type="GeneID" id="3637731"/>
<dbReference type="KEGG" id="cal:CAALFM_C502460CA"/>
<dbReference type="CGD" id="CAL0000191729">
    <property type="gene designation" value="ECM331"/>
</dbReference>
<dbReference type="VEuPathDB" id="FungiDB:C5_02460C_A"/>
<dbReference type="eggNOG" id="ENOG502QUZC">
    <property type="taxonomic scope" value="Eukaryota"/>
</dbReference>
<dbReference type="HOGENOM" id="CLU_035846_0_0_1"/>
<dbReference type="InParanoid" id="Q5AGC4"/>
<dbReference type="OrthoDB" id="536881at2759"/>
<dbReference type="PHI-base" id="PHI:6079"/>
<dbReference type="PRO" id="PR:Q5AGC4"/>
<dbReference type="Proteomes" id="UP000000559">
    <property type="component" value="Chromosome 5"/>
</dbReference>
<dbReference type="GO" id="GO:0009986">
    <property type="term" value="C:cell surface"/>
    <property type="evidence" value="ECO:0000314"/>
    <property type="project" value="CGD"/>
</dbReference>
<dbReference type="GO" id="GO:0005576">
    <property type="term" value="C:extracellular region"/>
    <property type="evidence" value="ECO:0007669"/>
    <property type="project" value="UniProtKB-KW"/>
</dbReference>
<dbReference type="GO" id="GO:0009277">
    <property type="term" value="C:fungal-type cell wall"/>
    <property type="evidence" value="ECO:0000314"/>
    <property type="project" value="CGD"/>
</dbReference>
<dbReference type="GO" id="GO:0005886">
    <property type="term" value="C:plasma membrane"/>
    <property type="evidence" value="ECO:0000314"/>
    <property type="project" value="CGD"/>
</dbReference>
<dbReference type="GO" id="GO:0098552">
    <property type="term" value="C:side of membrane"/>
    <property type="evidence" value="ECO:0007669"/>
    <property type="project" value="UniProtKB-KW"/>
</dbReference>
<dbReference type="GO" id="GO:0071555">
    <property type="term" value="P:cell wall organization"/>
    <property type="evidence" value="ECO:0007669"/>
    <property type="project" value="UniProtKB-KW"/>
</dbReference>
<dbReference type="FunFam" id="3.80.20.20:FF:000040">
    <property type="entry name" value="Cell surface GPI-anchored protein ECM33"/>
    <property type="match status" value="1"/>
</dbReference>
<dbReference type="FunFam" id="3.80.20.20:FF:000064">
    <property type="entry name" value="Cell surface GPI-anchored protein ECM33"/>
    <property type="match status" value="1"/>
</dbReference>
<dbReference type="Gene3D" id="3.80.20.20">
    <property type="entry name" value="Receptor L-domain"/>
    <property type="match status" value="2"/>
</dbReference>
<dbReference type="InterPro" id="IPR051648">
    <property type="entry name" value="CWI-Assembly_Regulator"/>
</dbReference>
<dbReference type="InterPro" id="IPR036941">
    <property type="entry name" value="Rcpt_L-dom_sf"/>
</dbReference>
<dbReference type="PANTHER" id="PTHR31018:SF3">
    <property type="entry name" value="RECEPTOR PROTEIN-TYROSINE KINASE"/>
    <property type="match status" value="1"/>
</dbReference>
<dbReference type="PANTHER" id="PTHR31018">
    <property type="entry name" value="SPORULATION-SPECIFIC PROTEIN-RELATED"/>
    <property type="match status" value="1"/>
</dbReference>
<dbReference type="SUPFAM" id="SSF52058">
    <property type="entry name" value="L domain-like"/>
    <property type="match status" value="2"/>
</dbReference>
<gene>
    <name type="primary">ECM331</name>
    <name type="synonym">ECM33</name>
    <name type="synonym">PST1</name>
    <name type="ordered locus">CAALFM_C502460CA</name>
    <name type="ORF">CaO19.11730</name>
    <name type="ORF">CaO19.4255</name>
</gene>
<proteinExistence type="evidence at protein level"/>
<feature type="signal peptide" evidence="2">
    <location>
        <begin position="1"/>
        <end position="20"/>
    </location>
</feature>
<feature type="chain" id="PRO_0000424915" description="Cell surface GPI-anchored protein ECM33">
    <location>
        <begin position="21"/>
        <end position="390"/>
    </location>
</feature>
<feature type="propeptide" id="PRO_0000424916" description="Removed in mature form">
    <location>
        <begin position="391"/>
        <end position="413"/>
    </location>
</feature>
<feature type="region of interest" description="Disordered" evidence="3">
    <location>
        <begin position="347"/>
        <end position="390"/>
    </location>
</feature>
<feature type="compositionally biased region" description="Low complexity" evidence="3">
    <location>
        <begin position="356"/>
        <end position="390"/>
    </location>
</feature>
<feature type="lipid moiety-binding region" description="GPI-anchor amidated glycine" evidence="10">
    <location>
        <position position="390"/>
    </location>
</feature>
<feature type="glycosylation site" description="N-linked (GlcNAc...) asparagine" evidence="2">
    <location>
        <position position="93"/>
    </location>
</feature>
<feature type="glycosylation site" description="N-linked (GlcNAc...) asparagine" evidence="2">
    <location>
        <position position="102"/>
    </location>
</feature>
<feature type="glycosylation site" description="N-linked (GlcNAc...) asparagine" evidence="2">
    <location>
        <position position="172"/>
    </location>
</feature>
<feature type="glycosylation site" description="N-linked (GlcNAc...) asparagine" evidence="2">
    <location>
        <position position="209"/>
    </location>
</feature>
<feature type="glycosylation site" description="N-linked (GlcNAc...) asparagine" evidence="2">
    <location>
        <position position="222"/>
    </location>
</feature>
<feature type="glycosylation site" description="N-linked (GlcNAc...) asparagine" evidence="2">
    <location>
        <position position="227"/>
    </location>
</feature>
<feature type="glycosylation site" description="N-linked (GlcNAc...) asparagine" evidence="2">
    <location>
        <position position="279"/>
    </location>
</feature>
<feature type="glycosylation site" description="N-linked (GlcNAc...) asparagine" evidence="2">
    <location>
        <position position="290"/>
    </location>
</feature>
<feature type="glycosylation site" description="N-linked (GlcNAc...) asparagine" evidence="2">
    <location>
        <position position="306"/>
    </location>
</feature>
<feature type="glycosylation site" description="N-linked (GlcNAc...) asparagine" evidence="2">
    <location>
        <position position="322"/>
    </location>
</feature>
<feature type="glycosylation site" description="N-linked (GlcNAc...) asparagine" evidence="2">
    <location>
        <position position="382"/>
    </location>
</feature>
<organism>
    <name type="scientific">Candida albicans (strain SC5314 / ATCC MYA-2876)</name>
    <name type="common">Yeast</name>
    <dbReference type="NCBI Taxonomy" id="237561"/>
    <lineage>
        <taxon>Eukaryota</taxon>
        <taxon>Fungi</taxon>
        <taxon>Dikarya</taxon>
        <taxon>Ascomycota</taxon>
        <taxon>Saccharomycotina</taxon>
        <taxon>Pichiomycetes</taxon>
        <taxon>Debaryomycetaceae</taxon>
        <taxon>Candida/Lodderomyces clade</taxon>
        <taxon>Candida</taxon>
    </lineage>
</organism>